<sequence length="164" mass="18257">MRIGLYPGTFDPITLGHQDIIQRALELVDRLVIGVAINRDKSPLFALEDRVAMVREECDRIVAKRGGEIVVHPFENLLIDCARDVGATVIVRGLRAVADFEYEFQMVGMNRAMDDSIETVFLMADARRQAIASKLVKEIARLGGDVSKFVSPTVRDALVGRFAR</sequence>
<comment type="function">
    <text evidence="1">Reversibly transfers an adenylyl group from ATP to 4'-phosphopantetheine, yielding dephospho-CoA (dPCoA) and pyrophosphate.</text>
</comment>
<comment type="catalytic activity">
    <reaction evidence="1">
        <text>(R)-4'-phosphopantetheine + ATP + H(+) = 3'-dephospho-CoA + diphosphate</text>
        <dbReference type="Rhea" id="RHEA:19801"/>
        <dbReference type="ChEBI" id="CHEBI:15378"/>
        <dbReference type="ChEBI" id="CHEBI:30616"/>
        <dbReference type="ChEBI" id="CHEBI:33019"/>
        <dbReference type="ChEBI" id="CHEBI:57328"/>
        <dbReference type="ChEBI" id="CHEBI:61723"/>
        <dbReference type="EC" id="2.7.7.3"/>
    </reaction>
</comment>
<comment type="cofactor">
    <cofactor evidence="1">
        <name>Mg(2+)</name>
        <dbReference type="ChEBI" id="CHEBI:18420"/>
    </cofactor>
</comment>
<comment type="pathway">
    <text evidence="1">Cofactor biosynthesis; coenzyme A biosynthesis; CoA from (R)-pantothenate: step 4/5.</text>
</comment>
<comment type="subunit">
    <text evidence="1">Homohexamer.</text>
</comment>
<comment type="subcellular location">
    <subcellularLocation>
        <location evidence="1">Cytoplasm</location>
    </subcellularLocation>
</comment>
<comment type="similarity">
    <text evidence="1">Belongs to the bacterial CoaD family.</text>
</comment>
<evidence type="ECO:0000255" key="1">
    <source>
        <dbReference type="HAMAP-Rule" id="MF_00151"/>
    </source>
</evidence>
<name>COAD_PARDP</name>
<organism>
    <name type="scientific">Paracoccus denitrificans (strain Pd 1222)</name>
    <dbReference type="NCBI Taxonomy" id="318586"/>
    <lineage>
        <taxon>Bacteria</taxon>
        <taxon>Pseudomonadati</taxon>
        <taxon>Pseudomonadota</taxon>
        <taxon>Alphaproteobacteria</taxon>
        <taxon>Rhodobacterales</taxon>
        <taxon>Paracoccaceae</taxon>
        <taxon>Paracoccus</taxon>
    </lineage>
</organism>
<reference key="1">
    <citation type="submission" date="2006-12" db="EMBL/GenBank/DDBJ databases">
        <title>Complete sequence of chromosome 2 of Paracoccus denitrificans PD1222.</title>
        <authorList>
            <person name="Copeland A."/>
            <person name="Lucas S."/>
            <person name="Lapidus A."/>
            <person name="Barry K."/>
            <person name="Detter J.C."/>
            <person name="Glavina del Rio T."/>
            <person name="Hammon N."/>
            <person name="Israni S."/>
            <person name="Dalin E."/>
            <person name="Tice H."/>
            <person name="Pitluck S."/>
            <person name="Munk A.C."/>
            <person name="Brettin T."/>
            <person name="Bruce D."/>
            <person name="Han C."/>
            <person name="Tapia R."/>
            <person name="Gilna P."/>
            <person name="Schmutz J."/>
            <person name="Larimer F."/>
            <person name="Land M."/>
            <person name="Hauser L."/>
            <person name="Kyrpides N."/>
            <person name="Lykidis A."/>
            <person name="Spiro S."/>
            <person name="Richardson D.J."/>
            <person name="Moir J.W.B."/>
            <person name="Ferguson S.J."/>
            <person name="van Spanning R.J.M."/>
            <person name="Richardson P."/>
        </authorList>
    </citation>
    <scope>NUCLEOTIDE SEQUENCE [LARGE SCALE GENOMIC DNA]</scope>
    <source>
        <strain>Pd 1222</strain>
    </source>
</reference>
<dbReference type="EC" id="2.7.7.3" evidence="1"/>
<dbReference type="EMBL" id="CP000490">
    <property type="protein sequence ID" value="ABL72540.1"/>
    <property type="molecule type" value="Genomic_DNA"/>
</dbReference>
<dbReference type="RefSeq" id="WP_011750701.1">
    <property type="nucleotide sequence ID" value="NC_008687.1"/>
</dbReference>
<dbReference type="SMR" id="A1BAJ6"/>
<dbReference type="STRING" id="318586.Pden_4476"/>
<dbReference type="EnsemblBacteria" id="ABL72540">
    <property type="protein sequence ID" value="ABL72540"/>
    <property type="gene ID" value="Pden_4476"/>
</dbReference>
<dbReference type="GeneID" id="93454141"/>
<dbReference type="KEGG" id="pde:Pden_4476"/>
<dbReference type="eggNOG" id="COG0669">
    <property type="taxonomic scope" value="Bacteria"/>
</dbReference>
<dbReference type="HOGENOM" id="CLU_100149_0_1_5"/>
<dbReference type="OrthoDB" id="9806661at2"/>
<dbReference type="UniPathway" id="UPA00241">
    <property type="reaction ID" value="UER00355"/>
</dbReference>
<dbReference type="Proteomes" id="UP000000361">
    <property type="component" value="Chromosome 2"/>
</dbReference>
<dbReference type="GO" id="GO:0005737">
    <property type="term" value="C:cytoplasm"/>
    <property type="evidence" value="ECO:0007669"/>
    <property type="project" value="UniProtKB-SubCell"/>
</dbReference>
<dbReference type="GO" id="GO:0005524">
    <property type="term" value="F:ATP binding"/>
    <property type="evidence" value="ECO:0007669"/>
    <property type="project" value="UniProtKB-KW"/>
</dbReference>
<dbReference type="GO" id="GO:0004595">
    <property type="term" value="F:pantetheine-phosphate adenylyltransferase activity"/>
    <property type="evidence" value="ECO:0007669"/>
    <property type="project" value="UniProtKB-UniRule"/>
</dbReference>
<dbReference type="GO" id="GO:0015937">
    <property type="term" value="P:coenzyme A biosynthetic process"/>
    <property type="evidence" value="ECO:0007669"/>
    <property type="project" value="UniProtKB-UniRule"/>
</dbReference>
<dbReference type="CDD" id="cd02163">
    <property type="entry name" value="PPAT"/>
    <property type="match status" value="1"/>
</dbReference>
<dbReference type="Gene3D" id="3.40.50.620">
    <property type="entry name" value="HUPs"/>
    <property type="match status" value="1"/>
</dbReference>
<dbReference type="HAMAP" id="MF_00151">
    <property type="entry name" value="PPAT_bact"/>
    <property type="match status" value="1"/>
</dbReference>
<dbReference type="InterPro" id="IPR004821">
    <property type="entry name" value="Cyt_trans-like"/>
</dbReference>
<dbReference type="InterPro" id="IPR001980">
    <property type="entry name" value="PPAT"/>
</dbReference>
<dbReference type="InterPro" id="IPR014729">
    <property type="entry name" value="Rossmann-like_a/b/a_fold"/>
</dbReference>
<dbReference type="NCBIfam" id="TIGR01510">
    <property type="entry name" value="coaD_prev_kdtB"/>
    <property type="match status" value="1"/>
</dbReference>
<dbReference type="NCBIfam" id="TIGR00125">
    <property type="entry name" value="cyt_tran_rel"/>
    <property type="match status" value="1"/>
</dbReference>
<dbReference type="PANTHER" id="PTHR21342">
    <property type="entry name" value="PHOSPHOPANTETHEINE ADENYLYLTRANSFERASE"/>
    <property type="match status" value="1"/>
</dbReference>
<dbReference type="PANTHER" id="PTHR21342:SF1">
    <property type="entry name" value="PHOSPHOPANTETHEINE ADENYLYLTRANSFERASE"/>
    <property type="match status" value="1"/>
</dbReference>
<dbReference type="Pfam" id="PF01467">
    <property type="entry name" value="CTP_transf_like"/>
    <property type="match status" value="1"/>
</dbReference>
<dbReference type="PRINTS" id="PR01020">
    <property type="entry name" value="LPSBIOSNTHSS"/>
</dbReference>
<dbReference type="SUPFAM" id="SSF52374">
    <property type="entry name" value="Nucleotidylyl transferase"/>
    <property type="match status" value="1"/>
</dbReference>
<accession>A1BAJ6</accession>
<proteinExistence type="inferred from homology"/>
<feature type="chain" id="PRO_1000076774" description="Phosphopantetheine adenylyltransferase">
    <location>
        <begin position="1"/>
        <end position="164"/>
    </location>
</feature>
<feature type="binding site" evidence="1">
    <location>
        <begin position="9"/>
        <end position="10"/>
    </location>
    <ligand>
        <name>ATP</name>
        <dbReference type="ChEBI" id="CHEBI:30616"/>
    </ligand>
</feature>
<feature type="binding site" evidence="1">
    <location>
        <position position="9"/>
    </location>
    <ligand>
        <name>substrate</name>
    </ligand>
</feature>
<feature type="binding site" evidence="1">
    <location>
        <position position="17"/>
    </location>
    <ligand>
        <name>ATP</name>
        <dbReference type="ChEBI" id="CHEBI:30616"/>
    </ligand>
</feature>
<feature type="binding site" evidence="1">
    <location>
        <position position="41"/>
    </location>
    <ligand>
        <name>substrate</name>
    </ligand>
</feature>
<feature type="binding site" evidence="1">
    <location>
        <position position="78"/>
    </location>
    <ligand>
        <name>substrate</name>
    </ligand>
</feature>
<feature type="binding site" evidence="1">
    <location>
        <position position="92"/>
    </location>
    <ligand>
        <name>substrate</name>
    </ligand>
</feature>
<feature type="binding site" evidence="1">
    <location>
        <begin position="93"/>
        <end position="95"/>
    </location>
    <ligand>
        <name>ATP</name>
        <dbReference type="ChEBI" id="CHEBI:30616"/>
    </ligand>
</feature>
<feature type="binding site" evidence="1">
    <location>
        <position position="103"/>
    </location>
    <ligand>
        <name>ATP</name>
        <dbReference type="ChEBI" id="CHEBI:30616"/>
    </ligand>
</feature>
<feature type="binding site" evidence="1">
    <location>
        <begin position="128"/>
        <end position="134"/>
    </location>
    <ligand>
        <name>ATP</name>
        <dbReference type="ChEBI" id="CHEBI:30616"/>
    </ligand>
</feature>
<feature type="site" description="Transition state stabilizer" evidence="1">
    <location>
        <position position="17"/>
    </location>
</feature>
<keyword id="KW-0067">ATP-binding</keyword>
<keyword id="KW-0173">Coenzyme A biosynthesis</keyword>
<keyword id="KW-0963">Cytoplasm</keyword>
<keyword id="KW-0460">Magnesium</keyword>
<keyword id="KW-0547">Nucleotide-binding</keyword>
<keyword id="KW-0548">Nucleotidyltransferase</keyword>
<keyword id="KW-1185">Reference proteome</keyword>
<keyword id="KW-0808">Transferase</keyword>
<gene>
    <name evidence="1" type="primary">coaD</name>
    <name type="ordered locus">Pden_4476</name>
</gene>
<protein>
    <recommendedName>
        <fullName evidence="1">Phosphopantetheine adenylyltransferase</fullName>
        <ecNumber evidence="1">2.7.7.3</ecNumber>
    </recommendedName>
    <alternativeName>
        <fullName evidence="1">Dephospho-CoA pyrophosphorylase</fullName>
    </alternativeName>
    <alternativeName>
        <fullName evidence="1">Pantetheine-phosphate adenylyltransferase</fullName>
        <shortName evidence="1">PPAT</shortName>
    </alternativeName>
</protein>